<accession>P99024</accession>
<accession>B1B178</accession>
<accession>P05218</accession>
<accession>Q3TFB6</accession>
<accession>Q3THH9</accession>
<accession>Q3TIL1</accession>
<accession>Q3UAV4</accession>
<accession>Q3UF52</accession>
<accession>Q8WUC1</accession>
<accession>Q9CY33</accession>
<comment type="function">
    <text>Tubulin is the major constituent of microtubules, a cylinder consisting of laterally associated linear protofilaments composed of alpha- and beta-tubulin heterodimers. Microtubules grow by the addition of GTP-tubulin dimers to the microtubule end, where a stabilizing cap forms. Below the cap, tubulin dimers are in GDP-bound state, owing to GTPase activity of alpha-tubulin.</text>
</comment>
<comment type="cofactor">
    <cofactor evidence="2">
        <name>Mg(2+)</name>
        <dbReference type="ChEBI" id="CHEBI:18420"/>
    </cofactor>
</comment>
<comment type="subunit">
    <text evidence="1 3 10 12 16">Heterodimer of alpha and beta chains (By similarity). A typical microtubule is a hollow water-filled tube with an outer diameter of 25 nm and an inner diameter of 15 nM. Alpha-beta heterodimers associate head-to-tail to form protofilaments running lengthwise along the microtubule wall with the beta-tubulin subunit facing the microtubule plus end conferring a structural polarity. Microtubules usually have 13 protofilaments but different protofilament numbers can be found in some organisms and specialized cells. Interacts with CIMAP3 (PubMed:20643351). Interacts with DIAPH1 (By similarity). Interacts with MX1 (By similarity). May interact with RNABP10 (PubMed:18347012). Interacts with CFAP157 (PubMed:27965440). Nascent tubulin polypeptide interacts (via beta-tubulin MREI motif) with TTC5/STRAP; this interaction results in tubulin mRNA-targeted degradation (By similarity).</text>
</comment>
<comment type="subcellular location">
    <subcellularLocation>
        <location evidence="15">Cytoplasm</location>
        <location evidence="15">Cytoskeleton</location>
    </subcellularLocation>
</comment>
<comment type="tissue specificity">
    <text evidence="13 15">Ubiquitously expressed with highest levels in spleen, thymus and immature brain. Expressed in embryonic brain, including throughout the developing cortex and in the subventricular zone. Also found in radial glial cells, intermediate progenitors, migrating neurons and postmitotic neurons (PubMed:23246003). Expressed in skin and developing hair follicle (PubMed:26637975).</text>
</comment>
<comment type="domain">
    <text evidence="1">The MREI motif is common among all beta-tubulin isoforms and may be critical for tubulin autoregulation.</text>
</comment>
<comment type="PTM">
    <text evidence="11 14 17">Some glutamate residues at the C-terminus are polyglycylated, resulting in polyglycine chains on the gamma-carboxyl group. Glycylation is mainly limited to tubulin incorporated into axonemes (cilia and flagella) whereas glutamylation is prevalent in neuronal cells, centrioles, axonemes, and the mitotic spindle. Both modifications can coexist on the same protein on adjacent residues, and lowering polyglycylation levels increases polyglutamylation, and reciprocally. Cilia and flagella glycylation is required for their stability and maintenance. Flagella glycylation controls sperm motility (PubMed:33414192).</text>
</comment>
<comment type="PTM">
    <text evidence="6 8 14">Some glutamate residues at the C-terminus are polyglutamylated, resulting in polyglutamate chains on the gamma-carboxyl group (PubMed:15890843). Polyglutamylation plays a key role in microtubule severing by spastin (SPAST). SPAST preferentially recognizes and acts on microtubules decorated with short polyglutamate tails: severing activity by SPAST increases as the number of glutamates per tubulin rises from one to eight, but decreases beyond this glutamylation threshold (By similarity). Glutamylation is also involved in cilia motility (PubMed:23897886).</text>
</comment>
<comment type="PTM">
    <text evidence="9">Phosphorylated on Ser-172 by CDK1 during the cell cycle, from metaphase to telophase, but not in interphase. This phosphorylation inhibits tubulin incorporation into microtubules.</text>
</comment>
<comment type="disruption phenotype">
    <text evidence="13">Results in a perturbation of the cell cycle of neurogenic progenitors as well as an alteration in the position of migrating neurons. There is a decrease in neurons in the cortical plate and an accumulation of cells within the ventricular and intermediate zones.</text>
</comment>
<comment type="similarity">
    <text evidence="18">Belongs to the tubulin family.</text>
</comment>
<evidence type="ECO:0000250" key="1">
    <source>
        <dbReference type="UniProtKB" id="P07437"/>
    </source>
</evidence>
<evidence type="ECO:0000250" key="2">
    <source>
        <dbReference type="UniProtKB" id="P68363"/>
    </source>
</evidence>
<evidence type="ECO:0000250" key="3">
    <source>
        <dbReference type="UniProtKB" id="P69893"/>
    </source>
</evidence>
<evidence type="ECO:0000250" key="4">
    <source>
        <dbReference type="UniProtKB" id="Q13509"/>
    </source>
</evidence>
<evidence type="ECO:0000250" key="5">
    <source>
        <dbReference type="UniProtKB" id="Q2T9S0"/>
    </source>
</evidence>
<evidence type="ECO:0000250" key="6">
    <source>
        <dbReference type="UniProtKB" id="Q71U36"/>
    </source>
</evidence>
<evidence type="ECO:0000256" key="7">
    <source>
        <dbReference type="SAM" id="MobiDB-lite"/>
    </source>
</evidence>
<evidence type="ECO:0000269" key="8">
    <source>
    </source>
</evidence>
<evidence type="ECO:0000269" key="9">
    <source>
    </source>
</evidence>
<evidence type="ECO:0000269" key="10">
    <source>
    </source>
</evidence>
<evidence type="ECO:0000269" key="11">
    <source>
    </source>
</evidence>
<evidence type="ECO:0000269" key="12">
    <source>
    </source>
</evidence>
<evidence type="ECO:0000269" key="13">
    <source>
    </source>
</evidence>
<evidence type="ECO:0000269" key="14">
    <source>
    </source>
</evidence>
<evidence type="ECO:0000269" key="15">
    <source>
    </source>
</evidence>
<evidence type="ECO:0000269" key="16">
    <source>
    </source>
</evidence>
<evidence type="ECO:0000269" key="17">
    <source>
    </source>
</evidence>
<evidence type="ECO:0000305" key="18"/>
<evidence type="ECO:0007744" key="19">
    <source>
    </source>
</evidence>
<evidence type="ECO:0007744" key="20">
    <source>
    </source>
</evidence>
<protein>
    <recommendedName>
        <fullName>Tubulin beta-5 chain</fullName>
    </recommendedName>
</protein>
<sequence>MREIVHIQAGQCGNQIGAKFWEVISDEHGIDPTGTYHGDSDLQLDRISVYYNEATGGKYVPRAILVDLEPGTMDSVRSGPFGQIFRPDNFVFGQSGAGNNWAKGHYTEGAELVDSVLDVVRKEAESCDCLQGFQLTHSLGGGTGSGMGTLLISKIREEYPDRIMNTFSVVPSPKVSDTVVEPYNATLSVHQLVENTDETYCIDNEALYDICFRTLKLTTPTYGDLNHLVSATMSGVTTCLRFPGQLNADLRKLAVNMVPFPRLHFFMPGFAPLTSRGSQQYRALTVPELTQQVFDAKNMMAACDPRHGRYLTVAAVFRGRMSMKEVDEQMLNVQNKNSSYFVEWIPNNVKTAVCDIPPRGLKMAVTFIGNSTAIQELFKRISEQFTAMFRRKAFLHWYTGEGMDEMEFTEAESNMNDLVSEYQQYQDATAEEEEDFGEEAEEEA</sequence>
<name>TBB5_MOUSE</name>
<feature type="chain" id="PRO_0000048246" description="Tubulin beta-5 chain">
    <location>
        <begin position="1"/>
        <end position="444"/>
    </location>
</feature>
<feature type="region of interest" description="Disordered" evidence="7">
    <location>
        <begin position="423"/>
        <end position="444"/>
    </location>
</feature>
<feature type="short sequence motif" description="MREI motif" evidence="1">
    <location>
        <begin position="1"/>
        <end position="4"/>
    </location>
</feature>
<feature type="compositionally biased region" description="Acidic residues" evidence="7">
    <location>
        <begin position="429"/>
        <end position="444"/>
    </location>
</feature>
<feature type="binding site" evidence="4">
    <location>
        <position position="11"/>
    </location>
    <ligand>
        <name>GTP</name>
        <dbReference type="ChEBI" id="CHEBI:37565"/>
    </ligand>
</feature>
<feature type="binding site" evidence="2">
    <location>
        <position position="69"/>
    </location>
    <ligand>
        <name>GTP</name>
        <dbReference type="ChEBI" id="CHEBI:37565"/>
    </ligand>
</feature>
<feature type="binding site" evidence="2">
    <location>
        <position position="69"/>
    </location>
    <ligand>
        <name>Mg(2+)</name>
        <dbReference type="ChEBI" id="CHEBI:18420"/>
    </ligand>
</feature>
<feature type="binding site" evidence="4">
    <location>
        <position position="138"/>
    </location>
    <ligand>
        <name>GTP</name>
        <dbReference type="ChEBI" id="CHEBI:37565"/>
    </ligand>
</feature>
<feature type="binding site" evidence="4">
    <location>
        <position position="142"/>
    </location>
    <ligand>
        <name>GTP</name>
        <dbReference type="ChEBI" id="CHEBI:37565"/>
    </ligand>
</feature>
<feature type="binding site" evidence="4">
    <location>
        <position position="143"/>
    </location>
    <ligand>
        <name>GTP</name>
        <dbReference type="ChEBI" id="CHEBI:37565"/>
    </ligand>
</feature>
<feature type="binding site" evidence="4">
    <location>
        <position position="144"/>
    </location>
    <ligand>
        <name>GTP</name>
        <dbReference type="ChEBI" id="CHEBI:37565"/>
    </ligand>
</feature>
<feature type="binding site" evidence="4">
    <location>
        <position position="204"/>
    </location>
    <ligand>
        <name>GTP</name>
        <dbReference type="ChEBI" id="CHEBI:37565"/>
    </ligand>
</feature>
<feature type="binding site" evidence="4">
    <location>
        <position position="226"/>
    </location>
    <ligand>
        <name>GTP</name>
        <dbReference type="ChEBI" id="CHEBI:37565"/>
    </ligand>
</feature>
<feature type="modified residue" description="Phosphoserine" evidence="19">
    <location>
        <position position="40"/>
    </location>
</feature>
<feature type="modified residue" description="Phosphothreonine" evidence="1">
    <location>
        <position position="55"/>
    </location>
</feature>
<feature type="modified residue" description="N6-acetyllysine; alternate" evidence="20">
    <location>
        <position position="58"/>
    </location>
</feature>
<feature type="modified residue" description="N6-succinyllysine; alternate" evidence="20">
    <location>
        <position position="58"/>
    </location>
</feature>
<feature type="modified residue" description="Phosphoserine; by CDK1" evidence="9">
    <location>
        <position position="172"/>
    </location>
</feature>
<feature type="modified residue" description="Phosphothreonine" evidence="1">
    <location>
        <position position="285"/>
    </location>
</feature>
<feature type="modified residue" description="Phosphothreonine" evidence="1">
    <location>
        <position position="290"/>
    </location>
</feature>
<feature type="modified residue" description="Omega-N-methylarginine" evidence="1">
    <location>
        <position position="318"/>
    </location>
</feature>
<feature type="modified residue" description="5-glutamyl polyglutamate" evidence="1">
    <location>
        <position position="434"/>
    </location>
</feature>
<feature type="modified residue" description="5-glutamyl polyglutamate" evidence="5">
    <location>
        <position position="438"/>
    </location>
</feature>
<feature type="modified residue" description="5-glutamyl polyglycine" evidence="1">
    <location>
        <position position="438"/>
    </location>
</feature>
<feature type="modified residue" description="5-glutamyl polyglutamate" evidence="1">
    <location>
        <position position="439"/>
    </location>
</feature>
<feature type="modified residue" description="5-glutamyl polyglycine" evidence="1">
    <location>
        <position position="439"/>
    </location>
</feature>
<feature type="modified residue" description="5-glutamyl polyglutamate" evidence="1">
    <location>
        <position position="441"/>
    </location>
</feature>
<feature type="modified residue" description="5-glutamyl polyglycine" evidence="1">
    <location>
        <position position="441"/>
    </location>
</feature>
<feature type="modified residue" description="5-glutamyl polyglycine" evidence="1">
    <location>
        <position position="442"/>
    </location>
</feature>
<feature type="modified residue" description="5-glutamyl polyglycine" evidence="1">
    <location>
        <position position="443"/>
    </location>
</feature>
<feature type="cross-link" description="Glycyl lysine isopeptide (Lys-Gly) (interchain with G-Cter in ubiquitin); alternate" evidence="1">
    <location>
        <position position="58"/>
    </location>
</feature>
<feature type="cross-link" description="Glycyl lysine isopeptide (Lys-Gly) (interchain with G-Cter in ubiquitin)" evidence="1">
    <location>
        <position position="324"/>
    </location>
</feature>
<feature type="mutagenesis site" description="Loss of CDK1-mediated phosphorylation." evidence="9">
    <original>S</original>
    <variation>A</variation>
    <location>
        <position position="172"/>
    </location>
</feature>
<feature type="mutagenesis site" description="Mimics phosphorylation, unable to incorporate into microtubules." evidence="9">
    <original>S</original>
    <variation>D</variation>
    <variation>E</variation>
    <location>
        <position position="172"/>
    </location>
</feature>
<feature type="sequence conflict" description="In Ref. 2; BAB27292." evidence="18" ref="2">
    <original>Q</original>
    <variation>P</variation>
    <location>
        <position position="15"/>
    </location>
</feature>
<feature type="sequence conflict" description="In Ref. 2; BAE40217." evidence="18" ref="2">
    <original>D</original>
    <variation>N</variation>
    <location>
        <position position="114"/>
    </location>
</feature>
<feature type="sequence conflict" description="In Ref. 2; BAE28709." evidence="18" ref="2">
    <original>T</original>
    <variation>N</variation>
    <location>
        <position position="143"/>
    </location>
</feature>
<feature type="sequence conflict" description="In Ref. 2; BAE40217." evidence="18" ref="2">
    <original>H</original>
    <variation>D</variation>
    <location>
        <position position="264"/>
    </location>
</feature>
<feature type="sequence conflict" description="In Ref. 2; BAE39835." evidence="18" ref="2">
    <original>H</original>
    <variation>N</variation>
    <location>
        <position position="307"/>
    </location>
</feature>
<feature type="sequence conflict" description="In Ref. 2; BAE40217." evidence="18" ref="2">
    <original>P</original>
    <variation>T</variation>
    <location>
        <position position="357"/>
    </location>
</feature>
<feature type="sequence conflict" description="In Ref. 6; AAA40510." evidence="18" ref="6">
    <original>G</original>
    <variation>A</variation>
    <location>
        <position position="400"/>
    </location>
</feature>
<gene>
    <name type="primary">Tubb5</name>
</gene>
<proteinExistence type="evidence at protein level"/>
<organism>
    <name type="scientific">Mus musculus</name>
    <name type="common">Mouse</name>
    <dbReference type="NCBI Taxonomy" id="10090"/>
    <lineage>
        <taxon>Eukaryota</taxon>
        <taxon>Metazoa</taxon>
        <taxon>Chordata</taxon>
        <taxon>Craniata</taxon>
        <taxon>Vertebrata</taxon>
        <taxon>Euteleostomi</taxon>
        <taxon>Mammalia</taxon>
        <taxon>Eutheria</taxon>
        <taxon>Euarchontoglires</taxon>
        <taxon>Glires</taxon>
        <taxon>Rodentia</taxon>
        <taxon>Myomorpha</taxon>
        <taxon>Muroidea</taxon>
        <taxon>Muridae</taxon>
        <taxon>Murinae</taxon>
        <taxon>Mus</taxon>
        <taxon>Mus</taxon>
    </lineage>
</organism>
<keyword id="KW-0007">Acetylation</keyword>
<keyword id="KW-0963">Cytoplasm</keyword>
<keyword id="KW-0206">Cytoskeleton</keyword>
<keyword id="KW-0903">Direct protein sequencing</keyword>
<keyword id="KW-0342">GTP-binding</keyword>
<keyword id="KW-1017">Isopeptide bond</keyword>
<keyword id="KW-0460">Magnesium</keyword>
<keyword id="KW-0479">Metal-binding</keyword>
<keyword id="KW-0488">Methylation</keyword>
<keyword id="KW-0493">Microtubule</keyword>
<keyword id="KW-0547">Nucleotide-binding</keyword>
<keyword id="KW-0597">Phosphoprotein</keyword>
<keyword id="KW-1185">Reference proteome</keyword>
<keyword id="KW-0832">Ubl conjugation</keyword>
<dbReference type="EMBL" id="X04663">
    <property type="protein sequence ID" value="CAA28369.1"/>
    <property type="molecule type" value="mRNA"/>
</dbReference>
<dbReference type="EMBL" id="AK010960">
    <property type="protein sequence ID" value="BAB27292.1"/>
    <property type="molecule type" value="mRNA"/>
</dbReference>
<dbReference type="EMBL" id="AK011263">
    <property type="protein sequence ID" value="BAB27504.1"/>
    <property type="molecule type" value="mRNA"/>
</dbReference>
<dbReference type="EMBL" id="AK051164">
    <property type="protein sequence ID" value="BAC34541.1"/>
    <property type="molecule type" value="mRNA"/>
</dbReference>
<dbReference type="EMBL" id="AK051393">
    <property type="protein sequence ID" value="BAC34623.1"/>
    <property type="molecule type" value="mRNA"/>
</dbReference>
<dbReference type="EMBL" id="AK083327">
    <property type="protein sequence ID" value="BAC38866.1"/>
    <property type="molecule type" value="mRNA"/>
</dbReference>
<dbReference type="EMBL" id="AK146567">
    <property type="protein sequence ID" value="BAE27265.1"/>
    <property type="molecule type" value="mRNA"/>
</dbReference>
<dbReference type="EMBL" id="AK148978">
    <property type="protein sequence ID" value="BAE28709.1"/>
    <property type="molecule type" value="mRNA"/>
</dbReference>
<dbReference type="EMBL" id="AK151215">
    <property type="protein sequence ID" value="BAE30210.1"/>
    <property type="molecule type" value="mRNA"/>
</dbReference>
<dbReference type="EMBL" id="AK151670">
    <property type="protein sequence ID" value="BAE30596.1"/>
    <property type="molecule type" value="mRNA"/>
</dbReference>
<dbReference type="EMBL" id="AK160225">
    <property type="protein sequence ID" value="BAE35700.1"/>
    <property type="molecule type" value="mRNA"/>
</dbReference>
<dbReference type="EMBL" id="AK161575">
    <property type="protein sequence ID" value="BAE36471.1"/>
    <property type="molecule type" value="mRNA"/>
</dbReference>
<dbReference type="EMBL" id="AK165249">
    <property type="protein sequence ID" value="BAE38103.1"/>
    <property type="molecule type" value="mRNA"/>
</dbReference>
<dbReference type="EMBL" id="AK167691">
    <property type="protein sequence ID" value="BAE39738.1"/>
    <property type="molecule type" value="mRNA"/>
</dbReference>
<dbReference type="EMBL" id="AK167779">
    <property type="protein sequence ID" value="BAE39811.1"/>
    <property type="molecule type" value="mRNA"/>
</dbReference>
<dbReference type="EMBL" id="AK167808">
    <property type="protein sequence ID" value="BAE39835.1"/>
    <property type="molecule type" value="mRNA"/>
</dbReference>
<dbReference type="EMBL" id="AK167926">
    <property type="protein sequence ID" value="BAE39931.1"/>
    <property type="molecule type" value="mRNA"/>
</dbReference>
<dbReference type="EMBL" id="AK168271">
    <property type="protein sequence ID" value="BAE40217.1"/>
    <property type="molecule type" value="mRNA"/>
</dbReference>
<dbReference type="EMBL" id="AK169123">
    <property type="protein sequence ID" value="BAE40903.1"/>
    <property type="molecule type" value="mRNA"/>
</dbReference>
<dbReference type="EMBL" id="AK169210">
    <property type="protein sequence ID" value="BAE40982.1"/>
    <property type="molecule type" value="mRNA"/>
</dbReference>
<dbReference type="EMBL" id="AK169295">
    <property type="protein sequence ID" value="BAE41051.1"/>
    <property type="molecule type" value="mRNA"/>
</dbReference>
<dbReference type="EMBL" id="CR974451">
    <property type="status" value="NOT_ANNOTATED_CDS"/>
    <property type="molecule type" value="Genomic_DNA"/>
</dbReference>
<dbReference type="EMBL" id="BC003825">
    <property type="protein sequence ID" value="AAH03825.1"/>
    <property type="molecule type" value="mRNA"/>
</dbReference>
<dbReference type="EMBL" id="M28732">
    <property type="protein sequence ID" value="AAA40510.1"/>
    <property type="molecule type" value="mRNA"/>
</dbReference>
<dbReference type="CCDS" id="CCDS28706.1"/>
<dbReference type="PIR" id="E25437">
    <property type="entry name" value="E25437"/>
</dbReference>
<dbReference type="RefSeq" id="NP_035785.1">
    <property type="nucleotide sequence ID" value="NM_011655.5"/>
</dbReference>
<dbReference type="SMR" id="P99024"/>
<dbReference type="BioGRID" id="204381">
    <property type="interactions" value="93"/>
</dbReference>
<dbReference type="CORUM" id="P99024"/>
<dbReference type="ELM" id="P99024"/>
<dbReference type="FunCoup" id="P99024">
    <property type="interactions" value="2476"/>
</dbReference>
<dbReference type="IntAct" id="P99024">
    <property type="interactions" value="42"/>
</dbReference>
<dbReference type="MINT" id="P99024"/>
<dbReference type="STRING" id="10090.ENSMUSP00000001566"/>
<dbReference type="ChEMBL" id="CHEMBL4739682"/>
<dbReference type="CarbonylDB" id="P99024"/>
<dbReference type="GlyGen" id="P99024">
    <property type="glycosylation" value="2 sites, 1 N-linked glycan (1 site), 1 O-linked glycan (1 site)"/>
</dbReference>
<dbReference type="iPTMnet" id="P99024"/>
<dbReference type="MetOSite" id="P99024"/>
<dbReference type="PhosphoSitePlus" id="P99024"/>
<dbReference type="SwissPalm" id="P99024"/>
<dbReference type="REPRODUCTION-2DPAGE" id="IPI00117352"/>
<dbReference type="REPRODUCTION-2DPAGE" id="P99024"/>
<dbReference type="CPTAC" id="non-CPTAC-3881"/>
<dbReference type="jPOST" id="P99024"/>
<dbReference type="PaxDb" id="10090-ENSMUSP00000001566"/>
<dbReference type="PeptideAtlas" id="P99024"/>
<dbReference type="ProteomicsDB" id="254861"/>
<dbReference type="Pumba" id="P99024"/>
<dbReference type="TopDownProteomics" id="P99024"/>
<dbReference type="Antibodypedia" id="48344">
    <property type="antibodies" value="1035 antibodies from 45 providers"/>
</dbReference>
<dbReference type="DNASU" id="22154"/>
<dbReference type="Ensembl" id="ENSMUST00000001566.10">
    <property type="protein sequence ID" value="ENSMUSP00000001566.9"/>
    <property type="gene ID" value="ENSMUSG00000001525.11"/>
</dbReference>
<dbReference type="GeneID" id="22154"/>
<dbReference type="KEGG" id="mmu:22154"/>
<dbReference type="UCSC" id="uc008ciq.2">
    <property type="organism name" value="mouse"/>
</dbReference>
<dbReference type="AGR" id="MGI:107812"/>
<dbReference type="CTD" id="22154"/>
<dbReference type="MGI" id="MGI:107812">
    <property type="gene designation" value="Tubb5"/>
</dbReference>
<dbReference type="VEuPathDB" id="HostDB:ENSMUSG00000001525"/>
<dbReference type="eggNOG" id="KOG1375">
    <property type="taxonomic scope" value="Eukaryota"/>
</dbReference>
<dbReference type="GeneTree" id="ENSGT00940000154370"/>
<dbReference type="HOGENOM" id="CLU_015718_1_1_1"/>
<dbReference type="InParanoid" id="P99024"/>
<dbReference type="OMA" id="MANTTKY"/>
<dbReference type="OrthoDB" id="9987387at2759"/>
<dbReference type="PhylomeDB" id="P99024"/>
<dbReference type="TreeFam" id="TF300298"/>
<dbReference type="Reactome" id="R-MMU-2565942">
    <property type="pathway name" value="Regulation of PLK1 Activity at G2/M Transition"/>
</dbReference>
<dbReference type="Reactome" id="R-MMU-380259">
    <property type="pathway name" value="Loss of Nlp from mitotic centrosomes"/>
</dbReference>
<dbReference type="Reactome" id="R-MMU-380270">
    <property type="pathway name" value="Recruitment of mitotic centrosome proteins and complexes"/>
</dbReference>
<dbReference type="Reactome" id="R-MMU-380284">
    <property type="pathway name" value="Loss of proteins required for interphase microtubule organization from the centrosome"/>
</dbReference>
<dbReference type="Reactome" id="R-MMU-380320">
    <property type="pathway name" value="Recruitment of NuMA to mitotic centrosomes"/>
</dbReference>
<dbReference type="Reactome" id="R-MMU-5620912">
    <property type="pathway name" value="Anchoring of the basal body to the plasma membrane"/>
</dbReference>
<dbReference type="Reactome" id="R-MMU-6798695">
    <property type="pathway name" value="Neutrophil degranulation"/>
</dbReference>
<dbReference type="Reactome" id="R-MMU-8854518">
    <property type="pathway name" value="AURKA Activation by TPX2"/>
</dbReference>
<dbReference type="BioGRID-ORCS" id="22154">
    <property type="hits" value="30 hits in 74 CRISPR screens"/>
</dbReference>
<dbReference type="CD-CODE" id="CE726F99">
    <property type="entry name" value="Postsynaptic density"/>
</dbReference>
<dbReference type="ChiTaRS" id="Tubb5">
    <property type="organism name" value="mouse"/>
</dbReference>
<dbReference type="PRO" id="PR:P99024"/>
<dbReference type="Proteomes" id="UP000000589">
    <property type="component" value="Chromosome 17"/>
</dbReference>
<dbReference type="RNAct" id="P99024">
    <property type="molecule type" value="protein"/>
</dbReference>
<dbReference type="Bgee" id="ENSMUSG00000001525">
    <property type="expression patterns" value="Expressed in medial ganglionic eminence and 288 other cell types or tissues"/>
</dbReference>
<dbReference type="ExpressionAtlas" id="P99024">
    <property type="expression patterns" value="baseline and differential"/>
</dbReference>
<dbReference type="GO" id="GO:0044297">
    <property type="term" value="C:cell body"/>
    <property type="evidence" value="ECO:0007669"/>
    <property type="project" value="Ensembl"/>
</dbReference>
<dbReference type="GO" id="GO:0036464">
    <property type="term" value="C:cytoplasmic ribonucleoprotein granule"/>
    <property type="evidence" value="ECO:0007669"/>
    <property type="project" value="Ensembl"/>
</dbReference>
<dbReference type="GO" id="GO:0005829">
    <property type="term" value="C:cytosol"/>
    <property type="evidence" value="ECO:0000304"/>
    <property type="project" value="Reactome"/>
</dbReference>
<dbReference type="GO" id="GO:0045171">
    <property type="term" value="C:intercellular bridge"/>
    <property type="evidence" value="ECO:0007669"/>
    <property type="project" value="Ensembl"/>
</dbReference>
<dbReference type="GO" id="GO:0045121">
    <property type="term" value="C:membrane raft"/>
    <property type="evidence" value="ECO:0007669"/>
    <property type="project" value="Ensembl"/>
</dbReference>
<dbReference type="GO" id="GO:0005874">
    <property type="term" value="C:microtubule"/>
    <property type="evidence" value="ECO:0000314"/>
    <property type="project" value="MGI"/>
</dbReference>
<dbReference type="GO" id="GO:0072686">
    <property type="term" value="C:mitotic spindle"/>
    <property type="evidence" value="ECO:0007669"/>
    <property type="project" value="Ensembl"/>
</dbReference>
<dbReference type="GO" id="GO:0005641">
    <property type="term" value="C:nuclear envelope lumen"/>
    <property type="evidence" value="ECO:0007669"/>
    <property type="project" value="Ensembl"/>
</dbReference>
<dbReference type="GO" id="GO:0005634">
    <property type="term" value="C:nucleus"/>
    <property type="evidence" value="ECO:0000314"/>
    <property type="project" value="MGI"/>
</dbReference>
<dbReference type="GO" id="GO:0045298">
    <property type="term" value="C:tubulin complex"/>
    <property type="evidence" value="ECO:0000303"/>
    <property type="project" value="UniProtKB"/>
</dbReference>
<dbReference type="GO" id="GO:0005525">
    <property type="term" value="F:GTP binding"/>
    <property type="evidence" value="ECO:0000303"/>
    <property type="project" value="UniProtKB"/>
</dbReference>
<dbReference type="GO" id="GO:0032794">
    <property type="term" value="F:GTPase activating protein binding"/>
    <property type="evidence" value="ECO:0007669"/>
    <property type="project" value="Ensembl"/>
</dbReference>
<dbReference type="GO" id="GO:0003924">
    <property type="term" value="F:GTPase activity"/>
    <property type="evidence" value="ECO:0007669"/>
    <property type="project" value="InterPro"/>
</dbReference>
<dbReference type="GO" id="GO:0046872">
    <property type="term" value="F:metal ion binding"/>
    <property type="evidence" value="ECO:0007669"/>
    <property type="project" value="UniProtKB-KW"/>
</dbReference>
<dbReference type="GO" id="GO:0042288">
    <property type="term" value="F:MHC class I protein binding"/>
    <property type="evidence" value="ECO:0007669"/>
    <property type="project" value="Ensembl"/>
</dbReference>
<dbReference type="GO" id="GO:0019904">
    <property type="term" value="F:protein domain specific binding"/>
    <property type="evidence" value="ECO:0007669"/>
    <property type="project" value="Ensembl"/>
</dbReference>
<dbReference type="GO" id="GO:0044877">
    <property type="term" value="F:protein-containing complex binding"/>
    <property type="evidence" value="ECO:0007669"/>
    <property type="project" value="Ensembl"/>
</dbReference>
<dbReference type="GO" id="GO:0005200">
    <property type="term" value="F:structural constituent of cytoskeleton"/>
    <property type="evidence" value="ECO:0000314"/>
    <property type="project" value="MGI"/>
</dbReference>
<dbReference type="GO" id="GO:0031625">
    <property type="term" value="F:ubiquitin protein ligase binding"/>
    <property type="evidence" value="ECO:0007669"/>
    <property type="project" value="Ensembl"/>
</dbReference>
<dbReference type="GO" id="GO:0007017">
    <property type="term" value="P:microtubule-based process"/>
    <property type="evidence" value="ECO:0000314"/>
    <property type="project" value="MGI"/>
</dbReference>
<dbReference type="GO" id="GO:0071895">
    <property type="term" value="P:odontoblast differentiation"/>
    <property type="evidence" value="ECO:0007669"/>
    <property type="project" value="Ensembl"/>
</dbReference>
<dbReference type="GO" id="GO:0050807">
    <property type="term" value="P:regulation of synapse organization"/>
    <property type="evidence" value="ECO:0000314"/>
    <property type="project" value="SynGO"/>
</dbReference>
<dbReference type="GO" id="GO:0051225">
    <property type="term" value="P:spindle assembly"/>
    <property type="evidence" value="ECO:0000314"/>
    <property type="project" value="MGI"/>
</dbReference>
<dbReference type="CDD" id="cd02187">
    <property type="entry name" value="beta_tubulin"/>
    <property type="match status" value="1"/>
</dbReference>
<dbReference type="FunFam" id="1.10.287.600:FF:000002">
    <property type="entry name" value="Tubulin beta chain"/>
    <property type="match status" value="1"/>
</dbReference>
<dbReference type="FunFam" id="3.30.1330.20:FF:000002">
    <property type="entry name" value="Tubulin beta chain"/>
    <property type="match status" value="1"/>
</dbReference>
<dbReference type="FunFam" id="3.40.50.1440:FF:000003">
    <property type="entry name" value="Tubulin beta chain"/>
    <property type="match status" value="1"/>
</dbReference>
<dbReference type="Gene3D" id="1.10.287.600">
    <property type="entry name" value="Helix hairpin bin"/>
    <property type="match status" value="1"/>
</dbReference>
<dbReference type="Gene3D" id="3.30.1330.20">
    <property type="entry name" value="Tubulin/FtsZ, C-terminal domain"/>
    <property type="match status" value="1"/>
</dbReference>
<dbReference type="Gene3D" id="3.40.50.1440">
    <property type="entry name" value="Tubulin/FtsZ, GTPase domain"/>
    <property type="match status" value="1"/>
</dbReference>
<dbReference type="InterPro" id="IPR013838">
    <property type="entry name" value="Beta-tubulin_BS"/>
</dbReference>
<dbReference type="InterPro" id="IPR002453">
    <property type="entry name" value="Beta_tubulin"/>
</dbReference>
<dbReference type="InterPro" id="IPR008280">
    <property type="entry name" value="Tub_FtsZ_C"/>
</dbReference>
<dbReference type="InterPro" id="IPR000217">
    <property type="entry name" value="Tubulin"/>
</dbReference>
<dbReference type="InterPro" id="IPR037103">
    <property type="entry name" value="Tubulin/FtsZ-like_C"/>
</dbReference>
<dbReference type="InterPro" id="IPR018316">
    <property type="entry name" value="Tubulin/FtsZ_2-layer-sand-dom"/>
</dbReference>
<dbReference type="InterPro" id="IPR036525">
    <property type="entry name" value="Tubulin/FtsZ_GTPase_sf"/>
</dbReference>
<dbReference type="InterPro" id="IPR023123">
    <property type="entry name" value="Tubulin_C"/>
</dbReference>
<dbReference type="InterPro" id="IPR017975">
    <property type="entry name" value="Tubulin_CS"/>
</dbReference>
<dbReference type="InterPro" id="IPR003008">
    <property type="entry name" value="Tubulin_FtsZ_GTPase"/>
</dbReference>
<dbReference type="PANTHER" id="PTHR11588">
    <property type="entry name" value="TUBULIN"/>
    <property type="match status" value="1"/>
</dbReference>
<dbReference type="Pfam" id="PF00091">
    <property type="entry name" value="Tubulin"/>
    <property type="match status" value="1"/>
</dbReference>
<dbReference type="Pfam" id="PF03953">
    <property type="entry name" value="Tubulin_C"/>
    <property type="match status" value="1"/>
</dbReference>
<dbReference type="PRINTS" id="PR01163">
    <property type="entry name" value="BETATUBULIN"/>
</dbReference>
<dbReference type="PRINTS" id="PR01161">
    <property type="entry name" value="TUBULIN"/>
</dbReference>
<dbReference type="SMART" id="SM00864">
    <property type="entry name" value="Tubulin"/>
    <property type="match status" value="1"/>
</dbReference>
<dbReference type="SMART" id="SM00865">
    <property type="entry name" value="Tubulin_C"/>
    <property type="match status" value="1"/>
</dbReference>
<dbReference type="SUPFAM" id="SSF55307">
    <property type="entry name" value="Tubulin C-terminal domain-like"/>
    <property type="match status" value="1"/>
</dbReference>
<dbReference type="SUPFAM" id="SSF52490">
    <property type="entry name" value="Tubulin nucleotide-binding domain-like"/>
    <property type="match status" value="1"/>
</dbReference>
<dbReference type="PROSITE" id="PS00227">
    <property type="entry name" value="TUBULIN"/>
    <property type="match status" value="1"/>
</dbReference>
<dbReference type="PROSITE" id="PS00228">
    <property type="entry name" value="TUBULIN_B_AUTOREG"/>
    <property type="match status" value="1"/>
</dbReference>
<reference key="1">
    <citation type="journal article" date="1986" name="J. Cell Biol.">
        <title>The mammalian beta-tubulin repertoire: hematopoietic expression of a novel, heterologous beta-tubulin isotype.</title>
        <authorList>
            <person name="Wang D."/>
            <person name="Villasante A."/>
            <person name="Lewis S.A."/>
            <person name="Cowan N.J."/>
        </authorList>
    </citation>
    <scope>NUCLEOTIDE SEQUENCE [MRNA]</scope>
</reference>
<reference key="2">
    <citation type="journal article" date="2005" name="Science">
        <title>The transcriptional landscape of the mammalian genome.</title>
        <authorList>
            <person name="Carninci P."/>
            <person name="Kasukawa T."/>
            <person name="Katayama S."/>
            <person name="Gough J."/>
            <person name="Frith M.C."/>
            <person name="Maeda N."/>
            <person name="Oyama R."/>
            <person name="Ravasi T."/>
            <person name="Lenhard B."/>
            <person name="Wells C."/>
            <person name="Kodzius R."/>
            <person name="Shimokawa K."/>
            <person name="Bajic V.B."/>
            <person name="Brenner S.E."/>
            <person name="Batalov S."/>
            <person name="Forrest A.R."/>
            <person name="Zavolan M."/>
            <person name="Davis M.J."/>
            <person name="Wilming L.G."/>
            <person name="Aidinis V."/>
            <person name="Allen J.E."/>
            <person name="Ambesi-Impiombato A."/>
            <person name="Apweiler R."/>
            <person name="Aturaliya R.N."/>
            <person name="Bailey T.L."/>
            <person name="Bansal M."/>
            <person name="Baxter L."/>
            <person name="Beisel K.W."/>
            <person name="Bersano T."/>
            <person name="Bono H."/>
            <person name="Chalk A.M."/>
            <person name="Chiu K.P."/>
            <person name="Choudhary V."/>
            <person name="Christoffels A."/>
            <person name="Clutterbuck D.R."/>
            <person name="Crowe M.L."/>
            <person name="Dalla E."/>
            <person name="Dalrymple B.P."/>
            <person name="de Bono B."/>
            <person name="Della Gatta G."/>
            <person name="di Bernardo D."/>
            <person name="Down T."/>
            <person name="Engstrom P."/>
            <person name="Fagiolini M."/>
            <person name="Faulkner G."/>
            <person name="Fletcher C.F."/>
            <person name="Fukushima T."/>
            <person name="Furuno M."/>
            <person name="Futaki S."/>
            <person name="Gariboldi M."/>
            <person name="Georgii-Hemming P."/>
            <person name="Gingeras T.R."/>
            <person name="Gojobori T."/>
            <person name="Green R.E."/>
            <person name="Gustincich S."/>
            <person name="Harbers M."/>
            <person name="Hayashi Y."/>
            <person name="Hensch T.K."/>
            <person name="Hirokawa N."/>
            <person name="Hill D."/>
            <person name="Huminiecki L."/>
            <person name="Iacono M."/>
            <person name="Ikeo K."/>
            <person name="Iwama A."/>
            <person name="Ishikawa T."/>
            <person name="Jakt M."/>
            <person name="Kanapin A."/>
            <person name="Katoh M."/>
            <person name="Kawasawa Y."/>
            <person name="Kelso J."/>
            <person name="Kitamura H."/>
            <person name="Kitano H."/>
            <person name="Kollias G."/>
            <person name="Krishnan S.P."/>
            <person name="Kruger A."/>
            <person name="Kummerfeld S.K."/>
            <person name="Kurochkin I.V."/>
            <person name="Lareau L.F."/>
            <person name="Lazarevic D."/>
            <person name="Lipovich L."/>
            <person name="Liu J."/>
            <person name="Liuni S."/>
            <person name="McWilliam S."/>
            <person name="Madan Babu M."/>
            <person name="Madera M."/>
            <person name="Marchionni L."/>
            <person name="Matsuda H."/>
            <person name="Matsuzawa S."/>
            <person name="Miki H."/>
            <person name="Mignone F."/>
            <person name="Miyake S."/>
            <person name="Morris K."/>
            <person name="Mottagui-Tabar S."/>
            <person name="Mulder N."/>
            <person name="Nakano N."/>
            <person name="Nakauchi H."/>
            <person name="Ng P."/>
            <person name="Nilsson R."/>
            <person name="Nishiguchi S."/>
            <person name="Nishikawa S."/>
            <person name="Nori F."/>
            <person name="Ohara O."/>
            <person name="Okazaki Y."/>
            <person name="Orlando V."/>
            <person name="Pang K.C."/>
            <person name="Pavan W.J."/>
            <person name="Pavesi G."/>
            <person name="Pesole G."/>
            <person name="Petrovsky N."/>
            <person name="Piazza S."/>
            <person name="Reed J."/>
            <person name="Reid J.F."/>
            <person name="Ring B.Z."/>
            <person name="Ringwald M."/>
            <person name="Rost B."/>
            <person name="Ruan Y."/>
            <person name="Salzberg S.L."/>
            <person name="Sandelin A."/>
            <person name="Schneider C."/>
            <person name="Schoenbach C."/>
            <person name="Sekiguchi K."/>
            <person name="Semple C.A."/>
            <person name="Seno S."/>
            <person name="Sessa L."/>
            <person name="Sheng Y."/>
            <person name="Shibata Y."/>
            <person name="Shimada H."/>
            <person name="Shimada K."/>
            <person name="Silva D."/>
            <person name="Sinclair B."/>
            <person name="Sperling S."/>
            <person name="Stupka E."/>
            <person name="Sugiura K."/>
            <person name="Sultana R."/>
            <person name="Takenaka Y."/>
            <person name="Taki K."/>
            <person name="Tammoja K."/>
            <person name="Tan S.L."/>
            <person name="Tang S."/>
            <person name="Taylor M.S."/>
            <person name="Tegner J."/>
            <person name="Teichmann S.A."/>
            <person name="Ueda H.R."/>
            <person name="van Nimwegen E."/>
            <person name="Verardo R."/>
            <person name="Wei C.L."/>
            <person name="Yagi K."/>
            <person name="Yamanishi H."/>
            <person name="Zabarovsky E."/>
            <person name="Zhu S."/>
            <person name="Zimmer A."/>
            <person name="Hide W."/>
            <person name="Bult C."/>
            <person name="Grimmond S.M."/>
            <person name="Teasdale R.D."/>
            <person name="Liu E.T."/>
            <person name="Brusic V."/>
            <person name="Quackenbush J."/>
            <person name="Wahlestedt C."/>
            <person name="Mattick J.S."/>
            <person name="Hume D.A."/>
            <person name="Kai C."/>
            <person name="Sasaki D."/>
            <person name="Tomaru Y."/>
            <person name="Fukuda S."/>
            <person name="Kanamori-Katayama M."/>
            <person name="Suzuki M."/>
            <person name="Aoki J."/>
            <person name="Arakawa T."/>
            <person name="Iida J."/>
            <person name="Imamura K."/>
            <person name="Itoh M."/>
            <person name="Kato T."/>
            <person name="Kawaji H."/>
            <person name="Kawagashira N."/>
            <person name="Kawashima T."/>
            <person name="Kojima M."/>
            <person name="Kondo S."/>
            <person name="Konno H."/>
            <person name="Nakano K."/>
            <person name="Ninomiya N."/>
            <person name="Nishio T."/>
            <person name="Okada M."/>
            <person name="Plessy C."/>
            <person name="Shibata K."/>
            <person name="Shiraki T."/>
            <person name="Suzuki S."/>
            <person name="Tagami M."/>
            <person name="Waki K."/>
            <person name="Watahiki A."/>
            <person name="Okamura-Oho Y."/>
            <person name="Suzuki H."/>
            <person name="Kawai J."/>
            <person name="Hayashizaki Y."/>
        </authorList>
    </citation>
    <scope>NUCLEOTIDE SEQUENCE [LARGE SCALE MRNA]</scope>
    <source>
        <strain>C57BL/6J</strain>
        <strain>DBA/2J</strain>
        <tissue>Bone marrow</tissue>
        <tissue>Embryo</tissue>
        <tissue>Kidney</tissue>
        <tissue>Liver</tissue>
        <tissue>Pituitary</tissue>
        <tissue>Placenta</tissue>
        <tissue>Spinal ganglion</tissue>
        <tissue>Spleen</tissue>
        <tissue>Sympathetic ganglion</tissue>
        <tissue>Thymus</tissue>
    </source>
</reference>
<reference key="3">
    <citation type="journal article" date="2009" name="PLoS Biol.">
        <title>Lineage-specific biology revealed by a finished genome assembly of the mouse.</title>
        <authorList>
            <person name="Church D.M."/>
            <person name="Goodstadt L."/>
            <person name="Hillier L.W."/>
            <person name="Zody M.C."/>
            <person name="Goldstein S."/>
            <person name="She X."/>
            <person name="Bult C.J."/>
            <person name="Agarwala R."/>
            <person name="Cherry J.L."/>
            <person name="DiCuccio M."/>
            <person name="Hlavina W."/>
            <person name="Kapustin Y."/>
            <person name="Meric P."/>
            <person name="Maglott D."/>
            <person name="Birtle Z."/>
            <person name="Marques A.C."/>
            <person name="Graves T."/>
            <person name="Zhou S."/>
            <person name="Teague B."/>
            <person name="Potamousis K."/>
            <person name="Churas C."/>
            <person name="Place M."/>
            <person name="Herschleb J."/>
            <person name="Runnheim R."/>
            <person name="Forrest D."/>
            <person name="Amos-Landgraf J."/>
            <person name="Schwartz D.C."/>
            <person name="Cheng Z."/>
            <person name="Lindblad-Toh K."/>
            <person name="Eichler E.E."/>
            <person name="Ponting C.P."/>
        </authorList>
    </citation>
    <scope>NUCLEOTIDE SEQUENCE [LARGE SCALE GENOMIC DNA]</scope>
    <source>
        <strain>C57BL/6J</strain>
    </source>
</reference>
<reference key="4">
    <citation type="journal article" date="2004" name="Genome Res.">
        <title>The status, quality, and expansion of the NIH full-length cDNA project: the Mammalian Gene Collection (MGC).</title>
        <authorList>
            <consortium name="The MGC Project Team"/>
        </authorList>
    </citation>
    <scope>NUCLEOTIDE SEQUENCE [LARGE SCALE MRNA]</scope>
</reference>
<reference key="5">
    <citation type="submission" date="2007-07" db="UniProtKB">
        <authorList>
            <person name="Lubec G."/>
            <person name="Kang S.U."/>
            <person name="Klug S."/>
            <person name="Yang J.W."/>
            <person name="Zigmond M."/>
        </authorList>
    </citation>
    <scope>PROTEIN SEQUENCE OF 3-19; 63-121; 163-174; 217-241; 242-276; 283-297; 310-318; 321-359 AND 381-390</scope>
    <scope>IDENTIFICATION BY MASS SPECTROMETRY</scope>
    <source>
        <strain>C57BL/6J</strain>
        <tissue>Brain</tissue>
        <tissue>Hippocampus</tissue>
    </source>
</reference>
<reference key="6">
    <citation type="journal article" date="1985" name="J. Cell Biol.">
        <title>Five mouse tubulin isotypes and their regulated expression during development.</title>
        <authorList>
            <person name="Lewis S.A."/>
            <person name="Lee M.G.-S."/>
            <person name="Cowan N.J."/>
        </authorList>
    </citation>
    <scope>NUCLEOTIDE SEQUENCE [MRNA] OF 325-444</scope>
</reference>
<reference key="7">
    <citation type="journal article" date="2005" name="Science">
        <title>Tubulin polyglutamylase enzymes are members of the TTL domain protein family.</title>
        <authorList>
            <person name="Janke C."/>
            <person name="Rogowski K."/>
            <person name="Wloga D."/>
            <person name="Regnard C."/>
            <person name="Kajava A.V."/>
            <person name="Strub J.-M."/>
            <person name="Temurak N."/>
            <person name="van Dijk J."/>
            <person name="Boucher D."/>
            <person name="van Dorsselaer A."/>
            <person name="Suryavanshi S."/>
            <person name="Gaertig J."/>
            <person name="Edde B."/>
        </authorList>
    </citation>
    <scope>GLUTAMYLATION</scope>
</reference>
<reference key="8">
    <citation type="journal article" date="2006" name="Mol. Biol. Cell">
        <title>Microtubule regulation in mitosis: tubulin phosphorylation by the cyclin-dependent kinase Cdk1.</title>
        <authorList>
            <person name="Fourest-Lieuvin A."/>
            <person name="Peris L."/>
            <person name="Gache V."/>
            <person name="Garcia-Saez I."/>
            <person name="Juillan-Binard C."/>
            <person name="Lantez V."/>
            <person name="Job D."/>
        </authorList>
    </citation>
    <scope>PHOSPHORYLATION AT SER-172 BY CDK1</scope>
    <scope>MUTAGENESIS OF SER-172</scope>
</reference>
<reference key="9">
    <citation type="journal article" date="2008" name="J. Biol. Chem.">
        <title>RanBP10 is a cytoplasmic guanine nucleotide exchange factor that modulates noncentrosomal microtubules.</title>
        <authorList>
            <person name="Schulze H."/>
            <person name="Dose M."/>
            <person name="Korpal M."/>
            <person name="Meyer I."/>
            <person name="Italiano J.E. Jr."/>
            <person name="Shivdasani R.A."/>
        </authorList>
    </citation>
    <scope>INTERACTION WITH RANBP10</scope>
</reference>
<reference key="10">
    <citation type="journal article" date="2009" name="Cell">
        <title>Evolutionary divergence of enzymatic mechanisms for posttranslational polyglycylation.</title>
        <authorList>
            <person name="Rogowski K."/>
            <person name="Juge F."/>
            <person name="van Dijk J."/>
            <person name="Wloga D."/>
            <person name="Strub J.-M."/>
            <person name="Levilliers N."/>
            <person name="Thomas D."/>
            <person name="Bre M.-H."/>
            <person name="Van Dorsselaer A."/>
            <person name="Gaertig J."/>
            <person name="Janke C."/>
        </authorList>
    </citation>
    <scope>GLYCYLATION</scope>
</reference>
<reference key="11">
    <citation type="journal article" date="2010" name="Cell">
        <title>A tissue-specific atlas of mouse protein phosphorylation and expression.</title>
        <authorList>
            <person name="Huttlin E.L."/>
            <person name="Jedrychowski M.P."/>
            <person name="Elias J.E."/>
            <person name="Goswami T."/>
            <person name="Rad R."/>
            <person name="Beausoleil S.A."/>
            <person name="Villen J."/>
            <person name="Haas W."/>
            <person name="Sowa M.E."/>
            <person name="Gygi S.P."/>
        </authorList>
    </citation>
    <scope>PHOSPHORYLATION [LARGE SCALE ANALYSIS] AT SER-40</scope>
    <scope>IDENTIFICATION BY MASS SPECTROMETRY [LARGE SCALE ANALYSIS]</scope>
    <source>
        <tissue>Brain</tissue>
        <tissue>Brown adipose tissue</tissue>
        <tissue>Heart</tissue>
        <tissue>Kidney</tissue>
        <tissue>Liver</tissue>
        <tissue>Lung</tissue>
        <tissue>Pancreas</tissue>
        <tissue>Spleen</tissue>
        <tissue>Testis</tissue>
    </source>
</reference>
<reference key="12">
    <citation type="journal article" date="2010" name="Dev. Cell">
        <title>Pitchfork regulates primary cilia disassembly and left-right asymmetry.</title>
        <authorList>
            <person name="Kinzel D."/>
            <person name="Boldt K."/>
            <person name="Davis E.E."/>
            <person name="Burtscher I."/>
            <person name="Trumbach D."/>
            <person name="Diplas B."/>
            <person name="Attie-Bitach T."/>
            <person name="Wurst W."/>
            <person name="Katsanis N."/>
            <person name="Ueffing M."/>
            <person name="Lickert H."/>
        </authorList>
    </citation>
    <scope>INTERACTION WITH CIMAP3</scope>
</reference>
<reference key="13">
    <citation type="journal article" date="2012" name="Cell Rep.">
        <title>Mutations in the beta-tubulin gene TUBB5 cause microcephaly with structural brain abnormalities.</title>
        <authorList>
            <person name="Breuss M."/>
            <person name="Heng J.I."/>
            <person name="Poirier K."/>
            <person name="Tian G."/>
            <person name="Jaglin X.H."/>
            <person name="Qu Z."/>
            <person name="Braun A."/>
            <person name="Gstrein T."/>
            <person name="Ngo L."/>
            <person name="Haas M."/>
            <person name="Bahi-Buisson N."/>
            <person name="Moutard M.L."/>
            <person name="Passemard S."/>
            <person name="Verloes A."/>
            <person name="Gressens P."/>
            <person name="Xie Y."/>
            <person name="Robson K.J."/>
            <person name="Rani D.S."/>
            <person name="Thangaraj K."/>
            <person name="Clausen T."/>
            <person name="Chelly J."/>
            <person name="Cowan N.J."/>
            <person name="Keays D.A."/>
        </authorList>
    </citation>
    <scope>DISRUPTION PHENOTYPE</scope>
    <scope>TISSUE SPECIFICITY</scope>
</reference>
<reference key="14">
    <citation type="journal article" date="2013" name="Mol. Cell">
        <title>SIRT5-mediated lysine desuccinylation impacts diverse metabolic pathways.</title>
        <authorList>
            <person name="Park J."/>
            <person name="Chen Y."/>
            <person name="Tishkoff D.X."/>
            <person name="Peng C."/>
            <person name="Tan M."/>
            <person name="Dai L."/>
            <person name="Xie Z."/>
            <person name="Zhang Y."/>
            <person name="Zwaans B.M."/>
            <person name="Skinner M.E."/>
            <person name="Lombard D.B."/>
            <person name="Zhao Y."/>
        </authorList>
    </citation>
    <scope>ACETYLATION [LARGE SCALE ANALYSIS] AT LYS-58</scope>
    <scope>SUCCINYLATION [LARGE SCALE ANALYSIS] AT LYS-58</scope>
    <scope>IDENTIFICATION BY MASS SPECTROMETRY [LARGE SCALE ANALYSIS]</scope>
    <source>
        <tissue>Embryonic fibroblast</tissue>
    </source>
</reference>
<reference key="15">
    <citation type="journal article" date="2015" name="Am. J. Hum. Genet.">
        <title>Mutations in Either TUBB or MAPRE2 Cause Circumferential Skin Creases Kunze Type.</title>
        <authorList>
            <person name="Isrie M."/>
            <person name="Breuss M."/>
            <person name="Tian G."/>
            <person name="Hansen A.H."/>
            <person name="Cristofoli F."/>
            <person name="Morandell J."/>
            <person name="Kupchinsky Z.A."/>
            <person name="Sifrim A."/>
            <person name="Rodriguez-Rodriguez C.M."/>
            <person name="Dapena E.P."/>
            <person name="Doonanco K."/>
            <person name="Leonard N."/>
            <person name="Tinsa F."/>
            <person name="Moortgat S."/>
            <person name="Ulucan H."/>
            <person name="Koparir E."/>
            <person name="Karaca E."/>
            <person name="Katsanis N."/>
            <person name="Marton V."/>
            <person name="Vermeesch J.R."/>
            <person name="Davis E.E."/>
            <person name="Cowan N.J."/>
            <person name="Keays D.A."/>
            <person name="Van Esch H."/>
        </authorList>
    </citation>
    <scope>SUBCELLULAR LOCATION</scope>
    <scope>TISSUE SPECIFICITY</scope>
</reference>
<reference key="16">
    <citation type="journal article" date="2013" name="J. Cell Biol.">
        <title>Tubulin glycylases and glutamylases have distinct functions in stabilization and motility of ependymal cilia.</title>
        <authorList>
            <person name="Bosch Grau M."/>
            <person name="Gonzalez Curto G."/>
            <person name="Rocha C."/>
            <person name="Magiera M.M."/>
            <person name="Marques Sousa P."/>
            <person name="Giordano T."/>
            <person name="Spassky N."/>
            <person name="Janke C."/>
        </authorList>
    </citation>
    <scope>GLYCYLATION</scope>
    <scope>GLUTAMYLATION</scope>
</reference>
<reference key="17">
    <citation type="journal article" date="2016" name="Development">
        <title>CFAP157 is a murine downstream effector of FOXJ1 that is specifically required for flagellum morphogenesis and sperm motility.</title>
        <authorList>
            <person name="Weidemann M."/>
            <person name="Schuster-Gossler K."/>
            <person name="Stauber M."/>
            <person name="Wrede C."/>
            <person name="Hegermann J."/>
            <person name="Ott T."/>
            <person name="Boldt K."/>
            <person name="Beyer T."/>
            <person name="Serth K."/>
            <person name="Kremmer E."/>
            <person name="Blum M."/>
            <person name="Ueffing M."/>
            <person name="Gossler A."/>
        </authorList>
    </citation>
    <scope>INTERACTION WITH CFAP157</scope>
</reference>
<reference key="18">
    <citation type="journal article" date="2021" name="Science">
        <title>Tubulin glycylation controls axonemal dynein activity, flagellar beat, and male fertility.</title>
        <authorList>
            <person name="Gadadhar S."/>
            <person name="Alvarez Viar G."/>
            <person name="Hansen J.N."/>
            <person name="Gong A."/>
            <person name="Kostarev A."/>
            <person name="Ialy-Radio C."/>
            <person name="Leboucher S."/>
            <person name="Whitfield M."/>
            <person name="Ziyyat A."/>
            <person name="Toure A."/>
            <person name="Alvarez L."/>
            <person name="Pigino G."/>
            <person name="Janke C."/>
        </authorList>
    </citation>
    <scope>GLYCYLATION</scope>
</reference>